<dbReference type="EMBL" id="CP000964">
    <property type="protein sequence ID" value="ACI08865.1"/>
    <property type="molecule type" value="Genomic_DNA"/>
</dbReference>
<dbReference type="SMR" id="B5XZH9"/>
<dbReference type="KEGG" id="kpe:KPK_5495"/>
<dbReference type="HOGENOM" id="CLU_055275_0_0_6"/>
<dbReference type="Proteomes" id="UP000001734">
    <property type="component" value="Chromosome"/>
</dbReference>
<dbReference type="GO" id="GO:0005829">
    <property type="term" value="C:cytosol"/>
    <property type="evidence" value="ECO:0007669"/>
    <property type="project" value="TreeGrafter"/>
</dbReference>
<dbReference type="GO" id="GO:0008199">
    <property type="term" value="F:ferric iron binding"/>
    <property type="evidence" value="ECO:0007669"/>
    <property type="project" value="TreeGrafter"/>
</dbReference>
<dbReference type="GO" id="GO:0051604">
    <property type="term" value="P:protein maturation"/>
    <property type="evidence" value="ECO:0007669"/>
    <property type="project" value="TreeGrafter"/>
</dbReference>
<dbReference type="CDD" id="cd16341">
    <property type="entry name" value="FdhE"/>
    <property type="match status" value="1"/>
</dbReference>
<dbReference type="FunFam" id="3.90.1670.10:FF:000001">
    <property type="entry name" value="Protein FdhE"/>
    <property type="match status" value="1"/>
</dbReference>
<dbReference type="Gene3D" id="3.90.1670.10">
    <property type="entry name" value="FdhE-like domain"/>
    <property type="match status" value="1"/>
</dbReference>
<dbReference type="HAMAP" id="MF_00611">
    <property type="entry name" value="FdeH"/>
    <property type="match status" value="1"/>
</dbReference>
<dbReference type="InterPro" id="IPR024064">
    <property type="entry name" value="FdhE-like_sf"/>
</dbReference>
<dbReference type="InterPro" id="IPR056796">
    <property type="entry name" value="FdhE_C"/>
</dbReference>
<dbReference type="InterPro" id="IPR056797">
    <property type="entry name" value="FdhE_central"/>
</dbReference>
<dbReference type="InterPro" id="IPR056774">
    <property type="entry name" value="FdhE_N"/>
</dbReference>
<dbReference type="InterPro" id="IPR006452">
    <property type="entry name" value="Formate_DH_accessory"/>
</dbReference>
<dbReference type="NCBIfam" id="TIGR01562">
    <property type="entry name" value="FdhE"/>
    <property type="match status" value="1"/>
</dbReference>
<dbReference type="NCBIfam" id="NF002925">
    <property type="entry name" value="PRK03564.1"/>
    <property type="match status" value="1"/>
</dbReference>
<dbReference type="PANTHER" id="PTHR37689">
    <property type="entry name" value="PROTEIN FDHE"/>
    <property type="match status" value="1"/>
</dbReference>
<dbReference type="PANTHER" id="PTHR37689:SF1">
    <property type="entry name" value="PROTEIN FDHE"/>
    <property type="match status" value="1"/>
</dbReference>
<dbReference type="Pfam" id="PF24860">
    <property type="entry name" value="FdhE_C"/>
    <property type="match status" value="1"/>
</dbReference>
<dbReference type="Pfam" id="PF24859">
    <property type="entry name" value="FdhE_central"/>
    <property type="match status" value="1"/>
</dbReference>
<dbReference type="Pfam" id="PF04216">
    <property type="entry name" value="FdhE_N"/>
    <property type="match status" value="1"/>
</dbReference>
<dbReference type="PIRSF" id="PIRSF018296">
    <property type="entry name" value="Format_dh_formtn"/>
    <property type="match status" value="1"/>
</dbReference>
<dbReference type="SUPFAM" id="SSF144020">
    <property type="entry name" value="FdhE-like"/>
    <property type="match status" value="1"/>
</dbReference>
<accession>B5XZH9</accession>
<proteinExistence type="inferred from homology"/>
<reference key="1">
    <citation type="journal article" date="2008" name="PLoS Genet.">
        <title>Complete genome sequence of the N2-fixing broad host range endophyte Klebsiella pneumoniae 342 and virulence predictions verified in mice.</title>
        <authorList>
            <person name="Fouts D.E."/>
            <person name="Tyler H.L."/>
            <person name="DeBoy R.T."/>
            <person name="Daugherty S."/>
            <person name="Ren Q."/>
            <person name="Badger J.H."/>
            <person name="Durkin A.S."/>
            <person name="Huot H."/>
            <person name="Shrivastava S."/>
            <person name="Kothari S."/>
            <person name="Dodson R.J."/>
            <person name="Mohamoud Y."/>
            <person name="Khouri H."/>
            <person name="Roesch L.F.W."/>
            <person name="Krogfelt K.A."/>
            <person name="Struve C."/>
            <person name="Triplett E.W."/>
            <person name="Methe B.A."/>
        </authorList>
    </citation>
    <scope>NUCLEOTIDE SEQUENCE [LARGE SCALE GENOMIC DNA]</scope>
    <source>
        <strain>342</strain>
    </source>
</reference>
<name>FDHE_KLEP3</name>
<evidence type="ECO:0000255" key="1">
    <source>
        <dbReference type="HAMAP-Rule" id="MF_00611"/>
    </source>
</evidence>
<keyword id="KW-0963">Cytoplasm</keyword>
<sequence>MSIRIIPQDELGSSEKRTAEAIPPLLFPRLKNLYNRRAERLRELAANNPLGDYLRFAALIAHAQEVVLYDHPLQMDLTARIKAASEQGKPPLDIHVLPRDKHWHKLLHSLIAELKPEMSGPALAVIENLEKASEQELEQMASALFVSDFASVSSDKAPFIWAALSLYWAQMASLIPGKARAEYGEQRQFCPVCGSMPVSSIVQIGTTQGLRYLHCNLCETEWHVVRVKCSNCEQSRDLHYWSLDNEQAAVKAESCGDCGTYLKIMYQEKDPKVEAVADDLASLVLDARMEQEGFARSSINPFMFPGEGE</sequence>
<comment type="function">
    <text evidence="1">Necessary for formate dehydrogenase activity.</text>
</comment>
<comment type="subcellular location">
    <subcellularLocation>
        <location evidence="1">Cytoplasm</location>
    </subcellularLocation>
</comment>
<comment type="similarity">
    <text evidence="1">Belongs to the FdhE family.</text>
</comment>
<gene>
    <name evidence="1" type="primary">fdhE</name>
    <name type="ordered locus">KPK_5495</name>
</gene>
<protein>
    <recommendedName>
        <fullName evidence="1">Protein FdhE homolog</fullName>
    </recommendedName>
</protein>
<feature type="chain" id="PRO_1000130363" description="Protein FdhE homolog">
    <location>
        <begin position="1"/>
        <end position="309"/>
    </location>
</feature>
<organism>
    <name type="scientific">Klebsiella pneumoniae (strain 342)</name>
    <dbReference type="NCBI Taxonomy" id="507522"/>
    <lineage>
        <taxon>Bacteria</taxon>
        <taxon>Pseudomonadati</taxon>
        <taxon>Pseudomonadota</taxon>
        <taxon>Gammaproteobacteria</taxon>
        <taxon>Enterobacterales</taxon>
        <taxon>Enterobacteriaceae</taxon>
        <taxon>Klebsiella/Raoultella group</taxon>
        <taxon>Klebsiella</taxon>
        <taxon>Klebsiella pneumoniae complex</taxon>
    </lineage>
</organism>